<name>LPXC_SHEON</name>
<proteinExistence type="inferred from homology"/>
<feature type="chain" id="PRO_0000191956" description="UDP-3-O-acyl-N-acetylglucosamine deacetylase">
    <location>
        <begin position="1"/>
        <end position="306"/>
    </location>
</feature>
<feature type="active site" description="Proton donor" evidence="1">
    <location>
        <position position="265"/>
    </location>
</feature>
<feature type="binding site" evidence="1">
    <location>
        <position position="79"/>
    </location>
    <ligand>
        <name>Zn(2+)</name>
        <dbReference type="ChEBI" id="CHEBI:29105"/>
    </ligand>
</feature>
<feature type="binding site" evidence="1">
    <location>
        <position position="238"/>
    </location>
    <ligand>
        <name>Zn(2+)</name>
        <dbReference type="ChEBI" id="CHEBI:29105"/>
    </ligand>
</feature>
<feature type="binding site" evidence="1">
    <location>
        <position position="242"/>
    </location>
    <ligand>
        <name>Zn(2+)</name>
        <dbReference type="ChEBI" id="CHEBI:29105"/>
    </ligand>
</feature>
<keyword id="KW-0378">Hydrolase</keyword>
<keyword id="KW-0441">Lipid A biosynthesis</keyword>
<keyword id="KW-0444">Lipid biosynthesis</keyword>
<keyword id="KW-0443">Lipid metabolism</keyword>
<keyword id="KW-0479">Metal-binding</keyword>
<keyword id="KW-1185">Reference proteome</keyword>
<keyword id="KW-0862">Zinc</keyword>
<accession>Q8E9Q2</accession>
<reference key="1">
    <citation type="journal article" date="2002" name="Nat. Biotechnol.">
        <title>Genome sequence of the dissimilatory metal ion-reducing bacterium Shewanella oneidensis.</title>
        <authorList>
            <person name="Heidelberg J.F."/>
            <person name="Paulsen I.T."/>
            <person name="Nelson K.E."/>
            <person name="Gaidos E.J."/>
            <person name="Nelson W.C."/>
            <person name="Read T.D."/>
            <person name="Eisen J.A."/>
            <person name="Seshadri R."/>
            <person name="Ward N.L."/>
            <person name="Methe B.A."/>
            <person name="Clayton R.A."/>
            <person name="Meyer T."/>
            <person name="Tsapin A."/>
            <person name="Scott J."/>
            <person name="Beanan M.J."/>
            <person name="Brinkac L.M."/>
            <person name="Daugherty S.C."/>
            <person name="DeBoy R.T."/>
            <person name="Dodson R.J."/>
            <person name="Durkin A.S."/>
            <person name="Haft D.H."/>
            <person name="Kolonay J.F."/>
            <person name="Madupu R."/>
            <person name="Peterson J.D."/>
            <person name="Umayam L.A."/>
            <person name="White O."/>
            <person name="Wolf A.M."/>
            <person name="Vamathevan J.J."/>
            <person name="Weidman J.F."/>
            <person name="Impraim M."/>
            <person name="Lee K."/>
            <person name="Berry K.J."/>
            <person name="Lee C."/>
            <person name="Mueller J."/>
            <person name="Khouri H.M."/>
            <person name="Gill J."/>
            <person name="Utterback T.R."/>
            <person name="McDonald L.A."/>
            <person name="Feldblyum T.V."/>
            <person name="Smith H.O."/>
            <person name="Venter J.C."/>
            <person name="Nealson K.H."/>
            <person name="Fraser C.M."/>
        </authorList>
    </citation>
    <scope>NUCLEOTIDE SEQUENCE [LARGE SCALE GENOMIC DNA]</scope>
    <source>
        <strain>ATCC 700550 / JCM 31522 / CIP 106686 / LMG 19005 / NCIMB 14063 / MR-1</strain>
    </source>
</reference>
<sequence>MIFQRTVQKMVKATGVGLHSGNKVTLSIMPAPVNTGIVLVRTDMSPAVAIPAKAEQVRETTMCTALVNDEGIRISTIEHLFAALAGLGIDNAVIEVDAPEIPIMDGSASPFVFLLQSAGIKEQSAPKKYLKIKRPVRVEDGDKWAELKPFKGFRVNFKIDFAHPEIARSQQHVVMDFSTSAFVKDISRARTFGFMRDIEYLRANNLALGGSMENAVVLDEYRVLNPDGLRYEDEFVKHKILDAFGDLYVAGHAILGEFTAYKTGHALNNQLVRALLAQQDAWELVSFEKEADAPVSFTVPGGVVFA</sequence>
<protein>
    <recommendedName>
        <fullName evidence="1">UDP-3-O-acyl-N-acetylglucosamine deacetylase</fullName>
        <shortName evidence="1">UDP-3-O-acyl-GlcNAc deacetylase</shortName>
        <ecNumber evidence="1">3.5.1.108</ecNumber>
    </recommendedName>
    <alternativeName>
        <fullName evidence="1">UDP-3-O-[R-3-hydroxymyristoyl]-N-acetylglucosamine deacetylase</fullName>
    </alternativeName>
</protein>
<evidence type="ECO:0000255" key="1">
    <source>
        <dbReference type="HAMAP-Rule" id="MF_00388"/>
    </source>
</evidence>
<organism>
    <name type="scientific">Shewanella oneidensis (strain ATCC 700550 / JCM 31522 / CIP 106686 / LMG 19005 / NCIMB 14063 / MR-1)</name>
    <dbReference type="NCBI Taxonomy" id="211586"/>
    <lineage>
        <taxon>Bacteria</taxon>
        <taxon>Pseudomonadati</taxon>
        <taxon>Pseudomonadota</taxon>
        <taxon>Gammaproteobacteria</taxon>
        <taxon>Alteromonadales</taxon>
        <taxon>Shewanellaceae</taxon>
        <taxon>Shewanella</taxon>
    </lineage>
</organism>
<dbReference type="EC" id="3.5.1.108" evidence="1"/>
<dbReference type="EMBL" id="AE014299">
    <property type="protein sequence ID" value="AAN57186.1"/>
    <property type="molecule type" value="Genomic_DNA"/>
</dbReference>
<dbReference type="RefSeq" id="NP_719742.1">
    <property type="nucleotide sequence ID" value="NC_004347.2"/>
</dbReference>
<dbReference type="RefSeq" id="WP_011073895.1">
    <property type="nucleotide sequence ID" value="NC_004347.2"/>
</dbReference>
<dbReference type="SMR" id="Q8E9Q2"/>
<dbReference type="STRING" id="211586.SO_4214"/>
<dbReference type="PaxDb" id="211586-SO_4214"/>
<dbReference type="KEGG" id="son:SO_4214"/>
<dbReference type="PATRIC" id="fig|211586.12.peg.4072"/>
<dbReference type="eggNOG" id="COG0774">
    <property type="taxonomic scope" value="Bacteria"/>
</dbReference>
<dbReference type="HOGENOM" id="CLU_046528_1_0_6"/>
<dbReference type="OrthoDB" id="9802746at2"/>
<dbReference type="PhylomeDB" id="Q8E9Q2"/>
<dbReference type="BioCyc" id="SONE211586:G1GMP-3891-MONOMER"/>
<dbReference type="UniPathway" id="UPA00359">
    <property type="reaction ID" value="UER00478"/>
</dbReference>
<dbReference type="Proteomes" id="UP000008186">
    <property type="component" value="Chromosome"/>
</dbReference>
<dbReference type="GO" id="GO:0016020">
    <property type="term" value="C:membrane"/>
    <property type="evidence" value="ECO:0007669"/>
    <property type="project" value="GOC"/>
</dbReference>
<dbReference type="GO" id="GO:0046872">
    <property type="term" value="F:metal ion binding"/>
    <property type="evidence" value="ECO:0007669"/>
    <property type="project" value="UniProtKB-KW"/>
</dbReference>
<dbReference type="GO" id="GO:0103117">
    <property type="term" value="F:UDP-3-O-acyl-N-acetylglucosamine deacetylase activity"/>
    <property type="evidence" value="ECO:0007669"/>
    <property type="project" value="UniProtKB-UniRule"/>
</dbReference>
<dbReference type="GO" id="GO:0009245">
    <property type="term" value="P:lipid A biosynthetic process"/>
    <property type="evidence" value="ECO:0007669"/>
    <property type="project" value="UniProtKB-UniRule"/>
</dbReference>
<dbReference type="Gene3D" id="3.30.230.20">
    <property type="entry name" value="lpxc deacetylase, domain 1"/>
    <property type="match status" value="1"/>
</dbReference>
<dbReference type="Gene3D" id="3.30.1700.10">
    <property type="entry name" value="lpxc deacetylase, domain 2"/>
    <property type="match status" value="1"/>
</dbReference>
<dbReference type="HAMAP" id="MF_00388">
    <property type="entry name" value="LpxC"/>
    <property type="match status" value="1"/>
</dbReference>
<dbReference type="InterPro" id="IPR020568">
    <property type="entry name" value="Ribosomal_Su5_D2-typ_SF"/>
</dbReference>
<dbReference type="InterPro" id="IPR004463">
    <property type="entry name" value="UDP-acyl_GlcNac_deAcase"/>
</dbReference>
<dbReference type="InterPro" id="IPR011334">
    <property type="entry name" value="UDP-acyl_GlcNac_deAcase_C"/>
</dbReference>
<dbReference type="InterPro" id="IPR015870">
    <property type="entry name" value="UDP-acyl_N-AcGlcN_deAcase_N"/>
</dbReference>
<dbReference type="NCBIfam" id="TIGR00325">
    <property type="entry name" value="lpxC"/>
    <property type="match status" value="1"/>
</dbReference>
<dbReference type="PANTHER" id="PTHR33694">
    <property type="entry name" value="UDP-3-O-ACYL-N-ACETYLGLUCOSAMINE DEACETYLASE 1, MITOCHONDRIAL-RELATED"/>
    <property type="match status" value="1"/>
</dbReference>
<dbReference type="PANTHER" id="PTHR33694:SF1">
    <property type="entry name" value="UDP-3-O-ACYL-N-ACETYLGLUCOSAMINE DEACETYLASE 1, MITOCHONDRIAL-RELATED"/>
    <property type="match status" value="1"/>
</dbReference>
<dbReference type="Pfam" id="PF03331">
    <property type="entry name" value="LpxC"/>
    <property type="match status" value="1"/>
</dbReference>
<dbReference type="SUPFAM" id="SSF54211">
    <property type="entry name" value="Ribosomal protein S5 domain 2-like"/>
    <property type="match status" value="2"/>
</dbReference>
<comment type="function">
    <text evidence="1">Catalyzes the hydrolysis of UDP-3-O-myristoyl-N-acetylglucosamine to form UDP-3-O-myristoylglucosamine and acetate, the committed step in lipid A biosynthesis.</text>
</comment>
<comment type="catalytic activity">
    <reaction evidence="1">
        <text>a UDP-3-O-[(3R)-3-hydroxyacyl]-N-acetyl-alpha-D-glucosamine + H2O = a UDP-3-O-[(3R)-3-hydroxyacyl]-alpha-D-glucosamine + acetate</text>
        <dbReference type="Rhea" id="RHEA:67816"/>
        <dbReference type="ChEBI" id="CHEBI:15377"/>
        <dbReference type="ChEBI" id="CHEBI:30089"/>
        <dbReference type="ChEBI" id="CHEBI:137740"/>
        <dbReference type="ChEBI" id="CHEBI:173225"/>
        <dbReference type="EC" id="3.5.1.108"/>
    </reaction>
</comment>
<comment type="cofactor">
    <cofactor evidence="1">
        <name>Zn(2+)</name>
        <dbReference type="ChEBI" id="CHEBI:29105"/>
    </cofactor>
</comment>
<comment type="pathway">
    <text evidence="1">Glycolipid biosynthesis; lipid IV(A) biosynthesis; lipid IV(A) from (3R)-3-hydroxytetradecanoyl-[acyl-carrier-protein] and UDP-N-acetyl-alpha-D-glucosamine: step 2/6.</text>
</comment>
<comment type="similarity">
    <text evidence="1">Belongs to the LpxC family.</text>
</comment>
<gene>
    <name evidence="1" type="primary">lpxC</name>
    <name type="ordered locus">SO_4214</name>
</gene>